<organism>
    <name type="scientific">Rattus norvegicus</name>
    <name type="common">Rat</name>
    <dbReference type="NCBI Taxonomy" id="10116"/>
    <lineage>
        <taxon>Eukaryota</taxon>
        <taxon>Metazoa</taxon>
        <taxon>Chordata</taxon>
        <taxon>Craniata</taxon>
        <taxon>Vertebrata</taxon>
        <taxon>Euteleostomi</taxon>
        <taxon>Mammalia</taxon>
        <taxon>Eutheria</taxon>
        <taxon>Euarchontoglires</taxon>
        <taxon>Glires</taxon>
        <taxon>Rodentia</taxon>
        <taxon>Myomorpha</taxon>
        <taxon>Muroidea</taxon>
        <taxon>Muridae</taxon>
        <taxon>Murinae</taxon>
        <taxon>Rattus</taxon>
    </lineage>
</organism>
<gene>
    <name type="primary">Foxd1</name>
    <name type="synonym">Hfhbf2</name>
</gene>
<comment type="function">
    <text evidence="1 2">Transcription factor involved in regulation of gene expression in a variety of processes including formation of positional identity in the developing retina, regionalization of the optic chiasm, morphogenesis of the kidney, and neuralization of ectodermal cells (By similarity). Involved in transcriptional activation of PGF and C3 genes (By similarity).</text>
</comment>
<comment type="subcellular location">
    <subcellularLocation>
        <location evidence="3">Nucleus</location>
    </subcellularLocation>
</comment>
<keyword id="KW-0217">Developmental protein</keyword>
<keyword id="KW-0238">DNA-binding</keyword>
<keyword id="KW-0539">Nucleus</keyword>
<keyword id="KW-1185">Reference proteome</keyword>
<keyword id="KW-0804">Transcription</keyword>
<keyword id="KW-0805">Transcription regulation</keyword>
<reference key="1">
    <citation type="journal article" date="1993" name="Proc. Natl. Acad. Sci. U.S.A.">
        <title>Identification of nine tissue-specific transcription factors of the hepatocyte nuclear factor 3/forkhead DNA-binding-domain family.</title>
        <authorList>
            <person name="Clevidence D.E."/>
            <person name="Overdier D.G."/>
            <person name="Tao W."/>
            <person name="Qian X."/>
            <person name="Pani L."/>
            <person name="Lai E."/>
            <person name="Costa R.H."/>
        </authorList>
    </citation>
    <scope>NUCLEOTIDE SEQUENCE [MRNA]</scope>
    <source>
        <strain>Sprague-Dawley</strain>
    </source>
</reference>
<proteinExistence type="evidence at transcript level"/>
<sequence length="101" mass="11929">LVKPPYSYIALITMAILQSPKKRLTLSEICEFISGRFPYYREKFPAWQNSIRHNLSLNDCFVKIPREPGNPGKGNYWTLDPESADMFDNGSFLRRRKRFKR</sequence>
<feature type="chain" id="PRO_0000091813" description="Forkhead box protein D1">
    <location>
        <begin position="1" status="less than"/>
        <end position="101" status="greater than"/>
    </location>
</feature>
<feature type="DNA-binding region" description="Fork-head" evidence="3">
    <location>
        <begin position="3"/>
        <end position="97"/>
    </location>
</feature>
<feature type="non-terminal residue">
    <location>
        <position position="1"/>
    </location>
</feature>
<feature type="non-terminal residue">
    <location>
        <position position="101"/>
    </location>
</feature>
<dbReference type="EMBL" id="L13192">
    <property type="protein sequence ID" value="AAA41324.1"/>
    <property type="molecule type" value="mRNA"/>
</dbReference>
<dbReference type="PIR" id="I60922">
    <property type="entry name" value="I60922"/>
</dbReference>
<dbReference type="SMR" id="Q63251"/>
<dbReference type="STRING" id="10116.ENSRNOP00000053990"/>
<dbReference type="PhosphoSitePlus" id="Q63251"/>
<dbReference type="PaxDb" id="10116-ENSRNOP00000053990"/>
<dbReference type="UCSC" id="RGD:621712">
    <property type="organism name" value="rat"/>
</dbReference>
<dbReference type="AGR" id="RGD:621712"/>
<dbReference type="RGD" id="621712">
    <property type="gene designation" value="Foxd1"/>
</dbReference>
<dbReference type="eggNOG" id="KOG2294">
    <property type="taxonomic scope" value="Eukaryota"/>
</dbReference>
<dbReference type="InParanoid" id="Q63251"/>
<dbReference type="PhylomeDB" id="Q63251"/>
<dbReference type="Proteomes" id="UP000002494">
    <property type="component" value="Unplaced"/>
</dbReference>
<dbReference type="GO" id="GO:0005634">
    <property type="term" value="C:nucleus"/>
    <property type="evidence" value="ECO:0007669"/>
    <property type="project" value="UniProtKB-SubCell"/>
</dbReference>
<dbReference type="GO" id="GO:0003677">
    <property type="term" value="F:DNA binding"/>
    <property type="evidence" value="ECO:0000266"/>
    <property type="project" value="RGD"/>
</dbReference>
<dbReference type="GO" id="GO:0008301">
    <property type="term" value="F:DNA binding, bending"/>
    <property type="evidence" value="ECO:0000266"/>
    <property type="project" value="RGD"/>
</dbReference>
<dbReference type="GO" id="GO:0001228">
    <property type="term" value="F:DNA-binding transcription activator activity, RNA polymerase II-specific"/>
    <property type="evidence" value="ECO:0000266"/>
    <property type="project" value="RGD"/>
</dbReference>
<dbReference type="GO" id="GO:0000978">
    <property type="term" value="F:RNA polymerase II cis-regulatory region sequence-specific DNA binding"/>
    <property type="evidence" value="ECO:0000266"/>
    <property type="project" value="RGD"/>
</dbReference>
<dbReference type="GO" id="GO:0043565">
    <property type="term" value="F:sequence-specific DNA binding"/>
    <property type="evidence" value="ECO:0000266"/>
    <property type="project" value="RGD"/>
</dbReference>
<dbReference type="GO" id="GO:0007411">
    <property type="term" value="P:axon guidance"/>
    <property type="evidence" value="ECO:0000266"/>
    <property type="project" value="RGD"/>
</dbReference>
<dbReference type="GO" id="GO:0001658">
    <property type="term" value="P:branching involved in ureteric bud morphogenesis"/>
    <property type="evidence" value="ECO:0000266"/>
    <property type="project" value="RGD"/>
</dbReference>
<dbReference type="GO" id="GO:0060070">
    <property type="term" value="P:canonical Wnt signaling pathway"/>
    <property type="evidence" value="ECO:0000266"/>
    <property type="project" value="RGD"/>
</dbReference>
<dbReference type="GO" id="GO:0060678">
    <property type="term" value="P:dichotomous subdivision of terminal units involved in ureteric bud branching"/>
    <property type="evidence" value="ECO:0000250"/>
    <property type="project" value="UniProtKB"/>
</dbReference>
<dbReference type="GO" id="GO:0001822">
    <property type="term" value="P:kidney development"/>
    <property type="evidence" value="ECO:0000266"/>
    <property type="project" value="RGD"/>
</dbReference>
<dbReference type="GO" id="GO:0032275">
    <property type="term" value="P:luteinizing hormone secretion"/>
    <property type="evidence" value="ECO:0000266"/>
    <property type="project" value="RGD"/>
</dbReference>
<dbReference type="GO" id="GO:0072213">
    <property type="term" value="P:metanephric capsule development"/>
    <property type="evidence" value="ECO:0000250"/>
    <property type="project" value="UniProtKB"/>
</dbReference>
<dbReference type="GO" id="GO:0072267">
    <property type="term" value="P:metanephric capsule specification"/>
    <property type="evidence" value="ECO:0000250"/>
    <property type="project" value="UniProtKB"/>
</dbReference>
<dbReference type="GO" id="GO:0072210">
    <property type="term" value="P:metanephric nephron development"/>
    <property type="evidence" value="ECO:0000266"/>
    <property type="project" value="RGD"/>
</dbReference>
<dbReference type="GO" id="GO:0045892">
    <property type="term" value="P:negative regulation of DNA-templated transcription"/>
    <property type="evidence" value="ECO:0000250"/>
    <property type="project" value="UniProtKB"/>
</dbReference>
<dbReference type="GO" id="GO:0072076">
    <property type="term" value="P:nephrogenic mesenchyme development"/>
    <property type="evidence" value="ECO:0000266"/>
    <property type="project" value="RGD"/>
</dbReference>
<dbReference type="GO" id="GO:0072268">
    <property type="term" value="P:pattern specification involved in metanephros development"/>
    <property type="evidence" value="ECO:0000266"/>
    <property type="project" value="RGD"/>
</dbReference>
<dbReference type="GO" id="GO:0030513">
    <property type="term" value="P:positive regulation of BMP signaling pathway"/>
    <property type="evidence" value="ECO:0000250"/>
    <property type="project" value="UniProtKB"/>
</dbReference>
<dbReference type="GO" id="GO:0010628">
    <property type="term" value="P:positive regulation of gene expression"/>
    <property type="evidence" value="ECO:0000250"/>
    <property type="project" value="UniProtKB"/>
</dbReference>
<dbReference type="GO" id="GO:0090184">
    <property type="term" value="P:positive regulation of kidney development"/>
    <property type="evidence" value="ECO:0000250"/>
    <property type="project" value="UniProtKB"/>
</dbReference>
<dbReference type="GO" id="GO:0045944">
    <property type="term" value="P:positive regulation of transcription by RNA polymerase II"/>
    <property type="evidence" value="ECO:0000266"/>
    <property type="project" value="RGD"/>
</dbReference>
<dbReference type="FunFam" id="1.10.10.10:FF:000016">
    <property type="entry name" value="Forkhead box protein I1"/>
    <property type="match status" value="1"/>
</dbReference>
<dbReference type="Gene3D" id="1.10.10.10">
    <property type="entry name" value="Winged helix-like DNA-binding domain superfamily/Winged helix DNA-binding domain"/>
    <property type="match status" value="1"/>
</dbReference>
<dbReference type="InterPro" id="IPR001766">
    <property type="entry name" value="Fork_head_dom"/>
</dbReference>
<dbReference type="InterPro" id="IPR050211">
    <property type="entry name" value="FOX_domain-containing"/>
</dbReference>
<dbReference type="InterPro" id="IPR018122">
    <property type="entry name" value="TF_fork_head_CS_1"/>
</dbReference>
<dbReference type="InterPro" id="IPR030456">
    <property type="entry name" value="TF_fork_head_CS_2"/>
</dbReference>
<dbReference type="InterPro" id="IPR036388">
    <property type="entry name" value="WH-like_DNA-bd_sf"/>
</dbReference>
<dbReference type="InterPro" id="IPR036390">
    <property type="entry name" value="WH_DNA-bd_sf"/>
</dbReference>
<dbReference type="PANTHER" id="PTHR11829">
    <property type="entry name" value="FORKHEAD BOX PROTEIN"/>
    <property type="match status" value="1"/>
</dbReference>
<dbReference type="PANTHER" id="PTHR11829:SF361">
    <property type="entry name" value="FORKHEAD BOX PROTEIN D4-LIKE 1"/>
    <property type="match status" value="1"/>
</dbReference>
<dbReference type="Pfam" id="PF00250">
    <property type="entry name" value="Forkhead"/>
    <property type="match status" value="1"/>
</dbReference>
<dbReference type="PRINTS" id="PR00053">
    <property type="entry name" value="FORKHEAD"/>
</dbReference>
<dbReference type="SMART" id="SM00339">
    <property type="entry name" value="FH"/>
    <property type="match status" value="1"/>
</dbReference>
<dbReference type="SUPFAM" id="SSF46785">
    <property type="entry name" value="Winged helix' DNA-binding domain"/>
    <property type="match status" value="1"/>
</dbReference>
<dbReference type="PROSITE" id="PS00657">
    <property type="entry name" value="FORK_HEAD_1"/>
    <property type="match status" value="1"/>
</dbReference>
<dbReference type="PROSITE" id="PS00658">
    <property type="entry name" value="FORK_HEAD_2"/>
    <property type="match status" value="1"/>
</dbReference>
<dbReference type="PROSITE" id="PS50039">
    <property type="entry name" value="FORK_HEAD_3"/>
    <property type="match status" value="1"/>
</dbReference>
<evidence type="ECO:0000250" key="1">
    <source>
        <dbReference type="UniProtKB" id="Q16676"/>
    </source>
</evidence>
<evidence type="ECO:0000250" key="2">
    <source>
        <dbReference type="UniProtKB" id="Q61345"/>
    </source>
</evidence>
<evidence type="ECO:0000255" key="3">
    <source>
        <dbReference type="PROSITE-ProRule" id="PRU00089"/>
    </source>
</evidence>
<name>FOXD1_RAT</name>
<accession>Q63251</accession>
<protein>
    <recommendedName>
        <fullName>Forkhead box protein D1</fullName>
    </recommendedName>
    <alternativeName>
        <fullName>Brain factor 2</fullName>
        <shortName>BF-2</shortName>
    </alternativeName>
    <alternativeName>
        <fullName>HFH-BF-2</fullName>
    </alternativeName>
</protein>